<proteinExistence type="evidence at transcript level"/>
<dbReference type="EMBL" id="AM711639">
    <property type="protein sequence ID" value="CAM98321.1"/>
    <property type="status" value="ALT_SEQ"/>
    <property type="molecule type" value="Genomic_DNA"/>
</dbReference>
<dbReference type="RefSeq" id="YP_001430035.1">
    <property type="nucleotide sequence ID" value="NC_009765.1"/>
</dbReference>
<dbReference type="SMR" id="A7M8Z3"/>
<dbReference type="GeneID" id="5536708"/>
<dbReference type="GO" id="GO:0005763">
    <property type="term" value="C:mitochondrial small ribosomal subunit"/>
    <property type="evidence" value="ECO:0007669"/>
    <property type="project" value="TreeGrafter"/>
</dbReference>
<dbReference type="GO" id="GO:0009536">
    <property type="term" value="C:plastid"/>
    <property type="evidence" value="ECO:0007669"/>
    <property type="project" value="UniProtKB-SubCell"/>
</dbReference>
<dbReference type="GO" id="GO:0003735">
    <property type="term" value="F:structural constituent of ribosome"/>
    <property type="evidence" value="ECO:0007669"/>
    <property type="project" value="InterPro"/>
</dbReference>
<dbReference type="GO" id="GO:0006412">
    <property type="term" value="P:translation"/>
    <property type="evidence" value="ECO:0007669"/>
    <property type="project" value="InterPro"/>
</dbReference>
<dbReference type="CDD" id="cd01425">
    <property type="entry name" value="RPS2"/>
    <property type="match status" value="1"/>
</dbReference>
<dbReference type="FunFam" id="1.10.287.610:FF:000001">
    <property type="entry name" value="30S ribosomal protein S2"/>
    <property type="match status" value="1"/>
</dbReference>
<dbReference type="Gene3D" id="3.40.50.10490">
    <property type="entry name" value="Glucose-6-phosphate isomerase like protein, domain 1"/>
    <property type="match status" value="1"/>
</dbReference>
<dbReference type="Gene3D" id="1.10.287.610">
    <property type="entry name" value="Helix hairpin bin"/>
    <property type="match status" value="1"/>
</dbReference>
<dbReference type="HAMAP" id="MF_00291_B">
    <property type="entry name" value="Ribosomal_uS2_B"/>
    <property type="match status" value="1"/>
</dbReference>
<dbReference type="InterPro" id="IPR001865">
    <property type="entry name" value="Ribosomal_uS2"/>
</dbReference>
<dbReference type="InterPro" id="IPR005706">
    <property type="entry name" value="Ribosomal_uS2_bac/mit/plastid"/>
</dbReference>
<dbReference type="InterPro" id="IPR018130">
    <property type="entry name" value="Ribosomal_uS2_CS"/>
</dbReference>
<dbReference type="InterPro" id="IPR023591">
    <property type="entry name" value="Ribosomal_uS2_flav_dom_sf"/>
</dbReference>
<dbReference type="NCBIfam" id="TIGR01011">
    <property type="entry name" value="rpsB_bact"/>
    <property type="match status" value="1"/>
</dbReference>
<dbReference type="PANTHER" id="PTHR12534">
    <property type="entry name" value="30S RIBOSOMAL PROTEIN S2 PROKARYOTIC AND ORGANELLAR"/>
    <property type="match status" value="1"/>
</dbReference>
<dbReference type="PANTHER" id="PTHR12534:SF0">
    <property type="entry name" value="SMALL RIBOSOMAL SUBUNIT PROTEIN US2M"/>
    <property type="match status" value="1"/>
</dbReference>
<dbReference type="Pfam" id="PF00318">
    <property type="entry name" value="Ribosomal_S2"/>
    <property type="match status" value="1"/>
</dbReference>
<dbReference type="PRINTS" id="PR00395">
    <property type="entry name" value="RIBOSOMALS2"/>
</dbReference>
<dbReference type="SUPFAM" id="SSF52313">
    <property type="entry name" value="Ribosomal protein S2"/>
    <property type="match status" value="1"/>
</dbReference>
<dbReference type="PROSITE" id="PS00962">
    <property type="entry name" value="RIBOSOMAL_S2_1"/>
    <property type="match status" value="1"/>
</dbReference>
<dbReference type="PROSITE" id="PS00963">
    <property type="entry name" value="RIBOSOMAL_S2_2"/>
    <property type="match status" value="1"/>
</dbReference>
<geneLocation type="plastid"/>
<sequence length="236" mass="26875">MTKKYWNINLEDMLEARVHLGHSTQNWNPKMAPYISAKRKGIHIINLTRTARFLSEACDLVFYAASKGKKFLIVGTNNAADEAVARASKRARCHYVNKKWLGGMLTNWSTTETRLQKFRDLRMEQKKGGLNNLPKKEATMLKRKLARLQKYLGGIQYMTGLPDIVIIIDQHKEYTALQECRILGIPTISLIDTNCDPNLSDIAIPANDDAMASIRFILNKLVFAICQGYFSDLRKP</sequence>
<protein>
    <recommendedName>
        <fullName evidence="2">Small ribosomal subunit protein uS2c</fullName>
    </recommendedName>
    <alternativeName>
        <fullName>Plastid 30S ribosomal protein S2</fullName>
    </alternativeName>
</protein>
<feature type="chain" id="PRO_0000308476" description="Small ribosomal subunit protein uS2c">
    <location>
        <begin position="1"/>
        <end position="236"/>
    </location>
</feature>
<comment type="subcellular location">
    <subcellularLocation>
        <location>Plastid</location>
    </subcellularLocation>
</comment>
<comment type="RNA editing">
    <location>
        <position position="45" evidence="1"/>
    </location>
</comment>
<comment type="similarity">
    <text evidence="2">Belongs to the universal ribosomal protein uS2 family.</text>
</comment>
<comment type="caution">
    <text evidence="2">Young tissue from this organism is photosynthetic and contains some thylakoids, although the photosynthetic activity does not exceed the light compensation point.</text>
</comment>
<name>RR2_CUSGR</name>
<keyword id="KW-0934">Plastid</keyword>
<keyword id="KW-0687">Ribonucleoprotein</keyword>
<keyword id="KW-0689">Ribosomal protein</keyword>
<keyword id="KW-0691">RNA editing</keyword>
<organism>
    <name type="scientific">Cuscuta gronovii</name>
    <name type="common">Common dodder</name>
    <name type="synonym">Epithymum gronovii</name>
    <dbReference type="NCBI Taxonomy" id="35886"/>
    <lineage>
        <taxon>Eukaryota</taxon>
        <taxon>Viridiplantae</taxon>
        <taxon>Streptophyta</taxon>
        <taxon>Embryophyta</taxon>
        <taxon>Tracheophyta</taxon>
        <taxon>Spermatophyta</taxon>
        <taxon>Magnoliopsida</taxon>
        <taxon>eudicotyledons</taxon>
        <taxon>Gunneridae</taxon>
        <taxon>Pentapetalae</taxon>
        <taxon>asterids</taxon>
        <taxon>lamiids</taxon>
        <taxon>Solanales</taxon>
        <taxon>Convolvulaceae</taxon>
        <taxon>Cuscuteae</taxon>
        <taxon>Cuscuta</taxon>
        <taxon>Cuscuta subgen. Grammica</taxon>
        <taxon>Cuscuta sect. Oxycarpae</taxon>
    </lineage>
</organism>
<gene>
    <name type="primary">rps2</name>
</gene>
<reference key="1">
    <citation type="journal article" date="2007" name="BMC Plant Biol.">
        <title>Complete DNA sequences of the plastid genomes of two parasitic flowering plant species, Cuscuta reflexa and Cuscuta gronovii.</title>
        <authorList>
            <person name="Funk H.T."/>
            <person name="Berg S."/>
            <person name="Krupinska K."/>
            <person name="Maier U.-G."/>
            <person name="Krause K."/>
        </authorList>
    </citation>
    <scope>NUCLEOTIDE SEQUENCE [LARGE SCALE GENOMIC DNA]</scope>
    <scope>RNA EDITING</scope>
</reference>
<evidence type="ECO:0000269" key="1">
    <source>
    </source>
</evidence>
<evidence type="ECO:0000305" key="2"/>
<accession>A7M8Z3</accession>